<evidence type="ECO:0000255" key="1">
    <source>
        <dbReference type="HAMAP-Rule" id="MF_00358"/>
    </source>
</evidence>
<evidence type="ECO:0000256" key="2">
    <source>
        <dbReference type="SAM" id="MobiDB-lite"/>
    </source>
</evidence>
<evidence type="ECO:0000305" key="3"/>
<dbReference type="EMBL" id="AE017180">
    <property type="protein sequence ID" value="AAR34233.1"/>
    <property type="molecule type" value="Genomic_DNA"/>
</dbReference>
<dbReference type="RefSeq" id="NP_951960.1">
    <property type="nucleotide sequence ID" value="NC_002939.5"/>
</dbReference>
<dbReference type="SMR" id="Q74EQ6"/>
<dbReference type="STRING" id="243231.GSU0906"/>
<dbReference type="DNASU" id="2685427"/>
<dbReference type="EnsemblBacteria" id="AAR34233">
    <property type="protein sequence ID" value="AAR34233"/>
    <property type="gene ID" value="GSU0906"/>
</dbReference>
<dbReference type="KEGG" id="gsu:GSU0906"/>
<dbReference type="PATRIC" id="fig|243231.5.peg.909"/>
<dbReference type="eggNOG" id="COG0828">
    <property type="taxonomic scope" value="Bacteria"/>
</dbReference>
<dbReference type="HOGENOM" id="CLU_159258_0_2_7"/>
<dbReference type="InParanoid" id="Q74EQ6"/>
<dbReference type="OrthoDB" id="9811907at2"/>
<dbReference type="Proteomes" id="UP000000577">
    <property type="component" value="Chromosome"/>
</dbReference>
<dbReference type="GO" id="GO:1990904">
    <property type="term" value="C:ribonucleoprotein complex"/>
    <property type="evidence" value="ECO:0007669"/>
    <property type="project" value="UniProtKB-KW"/>
</dbReference>
<dbReference type="GO" id="GO:0005840">
    <property type="term" value="C:ribosome"/>
    <property type="evidence" value="ECO:0007669"/>
    <property type="project" value="UniProtKB-KW"/>
</dbReference>
<dbReference type="GO" id="GO:0003735">
    <property type="term" value="F:structural constituent of ribosome"/>
    <property type="evidence" value="ECO:0007669"/>
    <property type="project" value="InterPro"/>
</dbReference>
<dbReference type="GO" id="GO:0006412">
    <property type="term" value="P:translation"/>
    <property type="evidence" value="ECO:0007669"/>
    <property type="project" value="UniProtKB-UniRule"/>
</dbReference>
<dbReference type="Gene3D" id="1.20.5.1150">
    <property type="entry name" value="Ribosomal protein S8"/>
    <property type="match status" value="1"/>
</dbReference>
<dbReference type="HAMAP" id="MF_00358">
    <property type="entry name" value="Ribosomal_bS21"/>
    <property type="match status" value="1"/>
</dbReference>
<dbReference type="InterPro" id="IPR001911">
    <property type="entry name" value="Ribosomal_bS21"/>
</dbReference>
<dbReference type="InterPro" id="IPR038380">
    <property type="entry name" value="Ribosomal_bS21_sf"/>
</dbReference>
<dbReference type="NCBIfam" id="TIGR00030">
    <property type="entry name" value="S21p"/>
    <property type="match status" value="1"/>
</dbReference>
<dbReference type="PANTHER" id="PTHR21109">
    <property type="entry name" value="MITOCHONDRIAL 28S RIBOSOMAL PROTEIN S21"/>
    <property type="match status" value="1"/>
</dbReference>
<dbReference type="PANTHER" id="PTHR21109:SF0">
    <property type="entry name" value="SMALL RIBOSOMAL SUBUNIT PROTEIN BS21M"/>
    <property type="match status" value="1"/>
</dbReference>
<dbReference type="Pfam" id="PF01165">
    <property type="entry name" value="Ribosomal_S21"/>
    <property type="match status" value="1"/>
</dbReference>
<dbReference type="PRINTS" id="PR00976">
    <property type="entry name" value="RIBOSOMALS21"/>
</dbReference>
<gene>
    <name evidence="1" type="primary">rpsU1</name>
    <name type="ordered locus">GSU0906</name>
</gene>
<organism>
    <name type="scientific">Geobacter sulfurreducens (strain ATCC 51573 / DSM 12127 / PCA)</name>
    <dbReference type="NCBI Taxonomy" id="243231"/>
    <lineage>
        <taxon>Bacteria</taxon>
        <taxon>Pseudomonadati</taxon>
        <taxon>Thermodesulfobacteriota</taxon>
        <taxon>Desulfuromonadia</taxon>
        <taxon>Geobacterales</taxon>
        <taxon>Geobacteraceae</taxon>
        <taxon>Geobacter</taxon>
    </lineage>
</organism>
<proteinExistence type="inferred from homology"/>
<sequence>MQVSVQGNDVDKALRLLKRKLQTEGFFKEIKKRKHYEKPSVKKKRKQMEAERKRRKAQRFRKPDRD</sequence>
<accession>Q74EQ6</accession>
<reference key="1">
    <citation type="journal article" date="2003" name="Science">
        <title>Genome of Geobacter sulfurreducens: metal reduction in subsurface environments.</title>
        <authorList>
            <person name="Methe B.A."/>
            <person name="Nelson K.E."/>
            <person name="Eisen J.A."/>
            <person name="Paulsen I.T."/>
            <person name="Nelson W.C."/>
            <person name="Heidelberg J.F."/>
            <person name="Wu D."/>
            <person name="Wu M."/>
            <person name="Ward N.L."/>
            <person name="Beanan M.J."/>
            <person name="Dodson R.J."/>
            <person name="Madupu R."/>
            <person name="Brinkac L.M."/>
            <person name="Daugherty S.C."/>
            <person name="DeBoy R.T."/>
            <person name="Durkin A.S."/>
            <person name="Gwinn M.L."/>
            <person name="Kolonay J.F."/>
            <person name="Sullivan S.A."/>
            <person name="Haft D.H."/>
            <person name="Selengut J."/>
            <person name="Davidsen T.M."/>
            <person name="Zafar N."/>
            <person name="White O."/>
            <person name="Tran B."/>
            <person name="Romero C."/>
            <person name="Forberger H.A."/>
            <person name="Weidman J.F."/>
            <person name="Khouri H.M."/>
            <person name="Feldblyum T.V."/>
            <person name="Utterback T.R."/>
            <person name="Van Aken S.E."/>
            <person name="Lovley D.R."/>
            <person name="Fraser C.M."/>
        </authorList>
    </citation>
    <scope>NUCLEOTIDE SEQUENCE [LARGE SCALE GENOMIC DNA]</scope>
    <source>
        <strain>ATCC 51573 / DSM 12127 / PCA</strain>
    </source>
</reference>
<keyword id="KW-1185">Reference proteome</keyword>
<keyword id="KW-0687">Ribonucleoprotein</keyword>
<keyword id="KW-0689">Ribosomal protein</keyword>
<name>RS211_GEOSL</name>
<protein>
    <recommendedName>
        <fullName evidence="1">Small ribosomal subunit protein bS21A</fullName>
    </recommendedName>
    <alternativeName>
        <fullName evidence="3">30S ribosomal protein S21 1</fullName>
    </alternativeName>
</protein>
<feature type="chain" id="PRO_0000266681" description="Small ribosomal subunit protein bS21A">
    <location>
        <begin position="1"/>
        <end position="66"/>
    </location>
</feature>
<feature type="region of interest" description="Disordered" evidence="2">
    <location>
        <begin position="34"/>
        <end position="66"/>
    </location>
</feature>
<feature type="compositionally biased region" description="Basic residues" evidence="2">
    <location>
        <begin position="34"/>
        <end position="46"/>
    </location>
</feature>
<comment type="similarity">
    <text evidence="1">Belongs to the bacterial ribosomal protein bS21 family.</text>
</comment>